<gene>
    <name type="primary">efeU</name>
    <name type="ordered locus">ECP_1016</name>
</gene>
<sequence>MFVPFLIMLREGLEAALIVSLIASYLKRTQRGRWIGVMWIGVLLAAALCLGLGIFINETTGEFPQKEQELFEGIVAVIAVVILTWMVFWMRKVSRNVKVQLEQAVDSALQRGNHHGWALVMMVFFAVAREGLESVFFLLAAFQQDVGIWPPLGAMLGLATAVVLGFLLYWGGIRLNLGAFFKWTSLFILFVAAGLAAGAIRAFHEAGLWNHFQEIAFDMSAVLSTHSLFGTLMEGIFGYQEAPSVSEVAVWFIYLIPALVAFVLPPRAGATASRSV</sequence>
<evidence type="ECO:0000250" key="1"/>
<evidence type="ECO:0000255" key="2"/>
<evidence type="ECO:0000305" key="3"/>
<proteinExistence type="inferred from homology"/>
<comment type="function">
    <text evidence="1">Uptake of Fe(2+) ions across the membrane.</text>
</comment>
<comment type="subunit">
    <text evidence="1">Part of a ferrous iron transporter composed of EfeU, EfeO and EfeB.</text>
</comment>
<comment type="subcellular location">
    <subcellularLocation>
        <location evidence="1">Cell inner membrane</location>
        <topology evidence="1">Multi-pass membrane protein</topology>
    </subcellularLocation>
</comment>
<comment type="similarity">
    <text evidence="3">Belongs to the oxidase-dependent Fe transporter (OFeT) (TC 9.A.10.1) family.</text>
</comment>
<name>EFEU_ECOL5</name>
<feature type="chain" id="PRO_0000277545" description="Ferrous iron permease EfeU">
    <location>
        <begin position="1"/>
        <end position="276"/>
    </location>
</feature>
<feature type="topological domain" description="Periplasmic" evidence="2">
    <location>
        <position position="1"/>
    </location>
</feature>
<feature type="transmembrane region" description="Helical" evidence="2">
    <location>
        <begin position="2"/>
        <end position="22"/>
    </location>
</feature>
<feature type="topological domain" description="Cytoplasmic" evidence="2">
    <location>
        <begin position="23"/>
        <end position="34"/>
    </location>
</feature>
<feature type="transmembrane region" description="Helical" evidence="2">
    <location>
        <begin position="35"/>
        <end position="55"/>
    </location>
</feature>
<feature type="topological domain" description="Periplasmic" evidence="2">
    <location>
        <begin position="56"/>
        <end position="69"/>
    </location>
</feature>
<feature type="transmembrane region" description="Helical" evidence="2">
    <location>
        <begin position="70"/>
        <end position="90"/>
    </location>
</feature>
<feature type="topological domain" description="Cytoplasmic" evidence="2">
    <location>
        <begin position="91"/>
        <end position="118"/>
    </location>
</feature>
<feature type="transmembrane region" description="Helical" evidence="2">
    <location>
        <begin position="119"/>
        <end position="139"/>
    </location>
</feature>
<feature type="topological domain" description="Periplasmic" evidence="2">
    <location>
        <begin position="140"/>
        <end position="147"/>
    </location>
</feature>
<feature type="transmembrane region" description="Helical" evidence="2">
    <location>
        <begin position="148"/>
        <end position="168"/>
    </location>
</feature>
<feature type="topological domain" description="Cytoplasmic" evidence="2">
    <location>
        <begin position="169"/>
        <end position="179"/>
    </location>
</feature>
<feature type="transmembrane region" description="Helical" evidence="2">
    <location>
        <begin position="180"/>
        <end position="200"/>
    </location>
</feature>
<feature type="topological domain" description="Periplasmic" evidence="2">
    <location>
        <begin position="201"/>
        <end position="244"/>
    </location>
</feature>
<feature type="transmembrane region" description="Helical" evidence="2">
    <location>
        <begin position="245"/>
        <end position="265"/>
    </location>
</feature>
<feature type="topological domain" description="Cytoplasmic" evidence="2">
    <location>
        <begin position="266"/>
        <end position="276"/>
    </location>
</feature>
<dbReference type="EMBL" id="CP000247">
    <property type="protein sequence ID" value="ABG69029.1"/>
    <property type="molecule type" value="Genomic_DNA"/>
</dbReference>
<dbReference type="RefSeq" id="WP_000497947.1">
    <property type="nucleotide sequence ID" value="NC_008253.1"/>
</dbReference>
<dbReference type="SMR" id="Q0TJ50"/>
<dbReference type="KEGG" id="ecp:ECP_1016"/>
<dbReference type="HOGENOM" id="CLU_077905_0_0_6"/>
<dbReference type="Proteomes" id="UP000009182">
    <property type="component" value="Chromosome"/>
</dbReference>
<dbReference type="GO" id="GO:0033573">
    <property type="term" value="C:high-affinity iron permease complex"/>
    <property type="evidence" value="ECO:0007669"/>
    <property type="project" value="InterPro"/>
</dbReference>
<dbReference type="GO" id="GO:0015093">
    <property type="term" value="F:ferrous iron transmembrane transporter activity"/>
    <property type="evidence" value="ECO:0007669"/>
    <property type="project" value="TreeGrafter"/>
</dbReference>
<dbReference type="InterPro" id="IPR005217">
    <property type="entry name" value="EfeU/FTR1-like"/>
</dbReference>
<dbReference type="InterPro" id="IPR004923">
    <property type="entry name" value="FTR1/Fip1/EfeU"/>
</dbReference>
<dbReference type="InterPro" id="IPR036259">
    <property type="entry name" value="MFS_trans_sf"/>
</dbReference>
<dbReference type="NCBIfam" id="NF041756">
    <property type="entry name" value="EfeU"/>
    <property type="match status" value="1"/>
</dbReference>
<dbReference type="NCBIfam" id="TIGR00145">
    <property type="entry name" value="EfeU/Ftr1 family ferrous iron transporter subunit"/>
    <property type="match status" value="1"/>
</dbReference>
<dbReference type="PANTHER" id="PTHR31632">
    <property type="entry name" value="IRON TRANSPORTER FTH1"/>
    <property type="match status" value="1"/>
</dbReference>
<dbReference type="PANTHER" id="PTHR31632:SF2">
    <property type="entry name" value="PLASMA MEMBRANE IRON PERMEASE"/>
    <property type="match status" value="1"/>
</dbReference>
<dbReference type="Pfam" id="PF03239">
    <property type="entry name" value="FTR1"/>
    <property type="match status" value="1"/>
</dbReference>
<dbReference type="SUPFAM" id="SSF103473">
    <property type="entry name" value="MFS general substrate transporter"/>
    <property type="match status" value="1"/>
</dbReference>
<reference key="1">
    <citation type="journal article" date="2006" name="Mol. Microbiol.">
        <title>Role of pathogenicity island-associated integrases in the genome plasticity of uropathogenic Escherichia coli strain 536.</title>
        <authorList>
            <person name="Hochhut B."/>
            <person name="Wilde C."/>
            <person name="Balling G."/>
            <person name="Middendorf B."/>
            <person name="Dobrindt U."/>
            <person name="Brzuszkiewicz E."/>
            <person name="Gottschalk G."/>
            <person name="Carniel E."/>
            <person name="Hacker J."/>
        </authorList>
    </citation>
    <scope>NUCLEOTIDE SEQUENCE [LARGE SCALE GENOMIC DNA]</scope>
    <source>
        <strain>536 / UPEC</strain>
    </source>
</reference>
<protein>
    <recommendedName>
        <fullName>Ferrous iron permease EfeU</fullName>
    </recommendedName>
    <alternativeName>
        <fullName>Fe(2+) ion permease EfeU</fullName>
    </alternativeName>
    <alternativeName>
        <fullName>Ferrous iron uptake protein</fullName>
    </alternativeName>
</protein>
<organism>
    <name type="scientific">Escherichia coli O6:K15:H31 (strain 536 / UPEC)</name>
    <dbReference type="NCBI Taxonomy" id="362663"/>
    <lineage>
        <taxon>Bacteria</taxon>
        <taxon>Pseudomonadati</taxon>
        <taxon>Pseudomonadota</taxon>
        <taxon>Gammaproteobacteria</taxon>
        <taxon>Enterobacterales</taxon>
        <taxon>Enterobacteriaceae</taxon>
        <taxon>Escherichia</taxon>
    </lineage>
</organism>
<accession>Q0TJ50</accession>
<keyword id="KW-0997">Cell inner membrane</keyword>
<keyword id="KW-1003">Cell membrane</keyword>
<keyword id="KW-0406">Ion transport</keyword>
<keyword id="KW-0408">Iron</keyword>
<keyword id="KW-0410">Iron transport</keyword>
<keyword id="KW-0472">Membrane</keyword>
<keyword id="KW-0812">Transmembrane</keyword>
<keyword id="KW-1133">Transmembrane helix</keyword>
<keyword id="KW-0813">Transport</keyword>